<reference key="1">
    <citation type="journal article" date="1994" name="Mol. Gen. Genet.">
        <title>Sequence and promoter analysis of the highly expressed TEF gene of the filamentous fungus Ashbya gossypii.</title>
        <authorList>
            <person name="Steiner S."/>
            <person name="Philippsen P."/>
        </authorList>
    </citation>
    <scope>NUCLEOTIDE SEQUENCE [GENOMIC DNA]</scope>
    <source>
        <strain>ATCC 10895 / CBS 109.51 / FGSC 9923 / NRRL Y-1056</strain>
    </source>
</reference>
<reference key="2">
    <citation type="journal article" date="2004" name="Science">
        <title>The Ashbya gossypii genome as a tool for mapping the ancient Saccharomyces cerevisiae genome.</title>
        <authorList>
            <person name="Dietrich F.S."/>
            <person name="Voegeli S."/>
            <person name="Brachat S."/>
            <person name="Lerch A."/>
            <person name="Gates K."/>
            <person name="Steiner S."/>
            <person name="Mohr C."/>
            <person name="Poehlmann R."/>
            <person name="Luedi P."/>
            <person name="Choi S."/>
            <person name="Wing R.A."/>
            <person name="Flavier A."/>
            <person name="Gaffney T.D."/>
            <person name="Philippsen P."/>
        </authorList>
    </citation>
    <scope>NUCLEOTIDE SEQUENCE [LARGE SCALE GENOMIC DNA]</scope>
    <source>
        <strain>ATCC 10895 / CBS 109.51 / FGSC 9923 / NRRL Y-1056</strain>
    </source>
</reference>
<reference key="3">
    <citation type="journal article" date="2013" name="G3 (Bethesda)">
        <title>Genomes of Ashbya fungi isolated from insects reveal four mating-type loci, numerous translocations, lack of transposons, and distinct gene duplications.</title>
        <authorList>
            <person name="Dietrich F.S."/>
            <person name="Voegeli S."/>
            <person name="Kuo S."/>
            <person name="Philippsen P."/>
        </authorList>
    </citation>
    <scope>GENOME REANNOTATION</scope>
    <source>
        <strain>ATCC 10895 / CBS 109.51 / FGSC 9923 / NRRL Y-1056</strain>
    </source>
</reference>
<reference key="4">
    <citation type="journal article" date="2003" name="FEMS Yeast Res.">
        <title>Phylogenetic relationships among yeasts of the 'Saccharomyces complex' determined from multigene sequence analyses.</title>
        <authorList>
            <person name="Kurtzman C.P."/>
            <person name="Robnett C.J."/>
        </authorList>
    </citation>
    <scope>NUCLEOTIDE SEQUENCE [GENOMIC DNA] OF 22-397</scope>
    <source>
        <strain>ATCC 10895 / CBS 109.51 / FGSC 9923 / NRRL Y-1056</strain>
    </source>
</reference>
<proteinExistence type="inferred from homology"/>
<dbReference type="EMBL" id="X73978">
    <property type="protein sequence ID" value="CAA52157.1"/>
    <property type="molecule type" value="Genomic_DNA"/>
</dbReference>
<dbReference type="EMBL" id="AE016817">
    <property type="protein sequence ID" value="AAS51550.1"/>
    <property type="molecule type" value="Genomic_DNA"/>
</dbReference>
<dbReference type="EMBL" id="AF402087">
    <property type="protein sequence ID" value="AAP86548.1"/>
    <property type="molecule type" value="Genomic_DNA"/>
</dbReference>
<dbReference type="PIR" id="S41593">
    <property type="entry name" value="S41593"/>
</dbReference>
<dbReference type="RefSeq" id="NP_983726.1">
    <property type="nucleotide sequence ID" value="NM_209079.1"/>
</dbReference>
<dbReference type="SMR" id="P41752"/>
<dbReference type="FunCoup" id="P41752">
    <property type="interactions" value="2021"/>
</dbReference>
<dbReference type="STRING" id="284811.P41752"/>
<dbReference type="EnsemblFungi" id="AAS51550">
    <property type="protein sequence ID" value="AAS51550"/>
    <property type="gene ID" value="AGOS_ADL370C"/>
</dbReference>
<dbReference type="GeneID" id="4619861"/>
<dbReference type="KEGG" id="ago:AGOS_ADL370C"/>
<dbReference type="eggNOG" id="KOG0052">
    <property type="taxonomic scope" value="Eukaryota"/>
</dbReference>
<dbReference type="HOGENOM" id="CLU_007265_3_5_1"/>
<dbReference type="InParanoid" id="P41752"/>
<dbReference type="OMA" id="AIRDMGM"/>
<dbReference type="OrthoDB" id="3969558at2759"/>
<dbReference type="Proteomes" id="UP000000591">
    <property type="component" value="Chromosome IV"/>
</dbReference>
<dbReference type="GO" id="GO:0005737">
    <property type="term" value="C:cytoplasm"/>
    <property type="evidence" value="ECO:0007669"/>
    <property type="project" value="UniProtKB-SubCell"/>
</dbReference>
<dbReference type="GO" id="GO:0005525">
    <property type="term" value="F:GTP binding"/>
    <property type="evidence" value="ECO:0007669"/>
    <property type="project" value="UniProtKB-KW"/>
</dbReference>
<dbReference type="GO" id="GO:0003924">
    <property type="term" value="F:GTPase activity"/>
    <property type="evidence" value="ECO:0000318"/>
    <property type="project" value="GO_Central"/>
</dbReference>
<dbReference type="GO" id="GO:0003746">
    <property type="term" value="F:translation elongation factor activity"/>
    <property type="evidence" value="ECO:0000318"/>
    <property type="project" value="GO_Central"/>
</dbReference>
<dbReference type="GO" id="GO:0006417">
    <property type="term" value="P:regulation of translation"/>
    <property type="evidence" value="ECO:0007669"/>
    <property type="project" value="UniProtKB-ARBA"/>
</dbReference>
<dbReference type="GO" id="GO:0006412">
    <property type="term" value="P:translation"/>
    <property type="evidence" value="ECO:0000318"/>
    <property type="project" value="GO_Central"/>
</dbReference>
<dbReference type="GO" id="GO:0006414">
    <property type="term" value="P:translational elongation"/>
    <property type="evidence" value="ECO:0000318"/>
    <property type="project" value="GO_Central"/>
</dbReference>
<dbReference type="CDD" id="cd01883">
    <property type="entry name" value="EF1_alpha"/>
    <property type="match status" value="1"/>
</dbReference>
<dbReference type="CDD" id="cd03693">
    <property type="entry name" value="EF1_alpha_II"/>
    <property type="match status" value="1"/>
</dbReference>
<dbReference type="CDD" id="cd03705">
    <property type="entry name" value="EF1_alpha_III"/>
    <property type="match status" value="1"/>
</dbReference>
<dbReference type="FunFam" id="2.40.30.10:FF:000003">
    <property type="entry name" value="Elongation factor 1-alpha"/>
    <property type="match status" value="1"/>
</dbReference>
<dbReference type="FunFam" id="2.40.30.10:FF:000005">
    <property type="entry name" value="Elongation factor 1-alpha"/>
    <property type="match status" value="1"/>
</dbReference>
<dbReference type="FunFam" id="3.40.50.300:FF:000211">
    <property type="entry name" value="Elongation factor 1-alpha"/>
    <property type="match status" value="1"/>
</dbReference>
<dbReference type="Gene3D" id="3.40.50.300">
    <property type="entry name" value="P-loop containing nucleotide triphosphate hydrolases"/>
    <property type="match status" value="1"/>
</dbReference>
<dbReference type="Gene3D" id="2.40.30.10">
    <property type="entry name" value="Translation factors"/>
    <property type="match status" value="2"/>
</dbReference>
<dbReference type="HAMAP" id="MF_00118_A">
    <property type="entry name" value="EF_Tu_A"/>
    <property type="match status" value="1"/>
</dbReference>
<dbReference type="InterPro" id="IPR004161">
    <property type="entry name" value="EFTu-like_2"/>
</dbReference>
<dbReference type="InterPro" id="IPR031157">
    <property type="entry name" value="G_TR_CS"/>
</dbReference>
<dbReference type="InterPro" id="IPR054696">
    <property type="entry name" value="GTP-eEF1A_C"/>
</dbReference>
<dbReference type="InterPro" id="IPR027417">
    <property type="entry name" value="P-loop_NTPase"/>
</dbReference>
<dbReference type="InterPro" id="IPR000795">
    <property type="entry name" value="T_Tr_GTP-bd_dom"/>
</dbReference>
<dbReference type="InterPro" id="IPR050100">
    <property type="entry name" value="TRAFAC_GTPase_members"/>
</dbReference>
<dbReference type="InterPro" id="IPR009000">
    <property type="entry name" value="Transl_B-barrel_sf"/>
</dbReference>
<dbReference type="InterPro" id="IPR009001">
    <property type="entry name" value="Transl_elong_EF1A/Init_IF2_C"/>
</dbReference>
<dbReference type="InterPro" id="IPR004539">
    <property type="entry name" value="Transl_elong_EF1A_euk/arc"/>
</dbReference>
<dbReference type="NCBIfam" id="TIGR00483">
    <property type="entry name" value="EF-1_alpha"/>
    <property type="match status" value="1"/>
</dbReference>
<dbReference type="NCBIfam" id="NF008969">
    <property type="entry name" value="PRK12317.1"/>
    <property type="match status" value="1"/>
</dbReference>
<dbReference type="PANTHER" id="PTHR23115">
    <property type="entry name" value="TRANSLATION FACTOR"/>
    <property type="match status" value="1"/>
</dbReference>
<dbReference type="Pfam" id="PF22594">
    <property type="entry name" value="GTP-eEF1A_C"/>
    <property type="match status" value="1"/>
</dbReference>
<dbReference type="Pfam" id="PF00009">
    <property type="entry name" value="GTP_EFTU"/>
    <property type="match status" value="1"/>
</dbReference>
<dbReference type="Pfam" id="PF03144">
    <property type="entry name" value="GTP_EFTU_D2"/>
    <property type="match status" value="1"/>
</dbReference>
<dbReference type="PRINTS" id="PR00315">
    <property type="entry name" value="ELONGATNFCT"/>
</dbReference>
<dbReference type="SUPFAM" id="SSF50465">
    <property type="entry name" value="EF-Tu/eEF-1alpha/eIF2-gamma C-terminal domain"/>
    <property type="match status" value="1"/>
</dbReference>
<dbReference type="SUPFAM" id="SSF52540">
    <property type="entry name" value="P-loop containing nucleoside triphosphate hydrolases"/>
    <property type="match status" value="1"/>
</dbReference>
<dbReference type="SUPFAM" id="SSF50447">
    <property type="entry name" value="Translation proteins"/>
    <property type="match status" value="1"/>
</dbReference>
<dbReference type="PROSITE" id="PS00301">
    <property type="entry name" value="G_TR_1"/>
    <property type="match status" value="1"/>
</dbReference>
<dbReference type="PROSITE" id="PS51722">
    <property type="entry name" value="G_TR_2"/>
    <property type="match status" value="1"/>
</dbReference>
<name>EF1A_EREGS</name>
<evidence type="ECO:0000250" key="1"/>
<evidence type="ECO:0000250" key="2">
    <source>
        <dbReference type="UniProtKB" id="P02994"/>
    </source>
</evidence>
<evidence type="ECO:0000305" key="3"/>
<keyword id="KW-0963">Cytoplasm</keyword>
<keyword id="KW-0251">Elongation factor</keyword>
<keyword id="KW-0342">GTP-binding</keyword>
<keyword id="KW-0488">Methylation</keyword>
<keyword id="KW-0547">Nucleotide-binding</keyword>
<keyword id="KW-0648">Protein biosynthesis</keyword>
<keyword id="KW-1185">Reference proteome</keyword>
<organism>
    <name type="scientific">Eremothecium gossypii (strain ATCC 10895 / CBS 109.51 / FGSC 9923 / NRRL Y-1056)</name>
    <name type="common">Yeast</name>
    <name type="synonym">Ashbya gossypii</name>
    <dbReference type="NCBI Taxonomy" id="284811"/>
    <lineage>
        <taxon>Eukaryota</taxon>
        <taxon>Fungi</taxon>
        <taxon>Dikarya</taxon>
        <taxon>Ascomycota</taxon>
        <taxon>Saccharomycotina</taxon>
        <taxon>Saccharomycetes</taxon>
        <taxon>Saccharomycetales</taxon>
        <taxon>Saccharomycetaceae</taxon>
        <taxon>Eremothecium</taxon>
    </lineage>
</organism>
<gene>
    <name type="primary">TEF</name>
    <name type="ordered locus">ADL370C</name>
</gene>
<accession>P41752</accession>
<accession>Q7Z8W1</accession>
<feature type="initiator methionine" description="Removed" evidence="2">
    <location>
        <position position="1"/>
    </location>
</feature>
<feature type="chain" id="PRO_0000090952" description="Elongation factor 1-alpha">
    <location>
        <begin position="2"/>
        <end position="458"/>
    </location>
</feature>
<feature type="domain" description="tr-type G">
    <location>
        <begin position="5"/>
        <end position="240"/>
    </location>
</feature>
<feature type="region of interest" description="G1" evidence="1">
    <location>
        <begin position="14"/>
        <end position="21"/>
    </location>
</feature>
<feature type="region of interest" description="G2" evidence="1">
    <location>
        <begin position="70"/>
        <end position="74"/>
    </location>
</feature>
<feature type="region of interest" description="G3" evidence="1">
    <location>
        <begin position="91"/>
        <end position="94"/>
    </location>
</feature>
<feature type="region of interest" description="G4" evidence="1">
    <location>
        <begin position="153"/>
        <end position="156"/>
    </location>
</feature>
<feature type="region of interest" description="G5" evidence="1">
    <location>
        <begin position="192"/>
        <end position="194"/>
    </location>
</feature>
<feature type="binding site" evidence="1">
    <location>
        <begin position="14"/>
        <end position="21"/>
    </location>
    <ligand>
        <name>GTP</name>
        <dbReference type="ChEBI" id="CHEBI:37565"/>
    </ligand>
</feature>
<feature type="binding site" evidence="1">
    <location>
        <begin position="91"/>
        <end position="95"/>
    </location>
    <ligand>
        <name>GTP</name>
        <dbReference type="ChEBI" id="CHEBI:37565"/>
    </ligand>
</feature>
<feature type="binding site" evidence="1">
    <location>
        <begin position="153"/>
        <end position="156"/>
    </location>
    <ligand>
        <name>GTP</name>
        <dbReference type="ChEBI" id="CHEBI:37565"/>
    </ligand>
</feature>
<feature type="modified residue" description="N,N,N-trimethylglycine" evidence="2">
    <location>
        <position position="2"/>
    </location>
</feature>
<feature type="modified residue" description="N6,N6-dimethyllysine; alternate" evidence="2">
    <location>
        <position position="3"/>
    </location>
</feature>
<feature type="modified residue" description="N6-methyllysine; alternate" evidence="2">
    <location>
        <position position="3"/>
    </location>
</feature>
<feature type="modified residue" description="N6-methyllysine" evidence="2">
    <location>
        <position position="30"/>
    </location>
</feature>
<feature type="modified residue" description="N6,N6,N6-trimethyllysine" evidence="2">
    <location>
        <position position="79"/>
    </location>
</feature>
<feature type="modified residue" description="N6,N6-dimethyllysine; alternate" evidence="2">
    <location>
        <position position="316"/>
    </location>
</feature>
<feature type="modified residue" description="N6-methyllysine; alternate" evidence="2">
    <location>
        <position position="316"/>
    </location>
</feature>
<feature type="modified residue" description="N6-methyllysine" evidence="2">
    <location>
        <position position="390"/>
    </location>
</feature>
<comment type="function">
    <text>This protein promotes the GTP-dependent binding of aminoacyl-tRNA to the A-site of ribosomes during protein biosynthesis.</text>
</comment>
<comment type="subcellular location">
    <subcellularLocation>
        <location>Cytoplasm</location>
    </subcellularLocation>
</comment>
<comment type="similarity">
    <text evidence="3">Belongs to the TRAFAC class translation factor GTPase superfamily. Classic translation factor GTPase family. EF-Tu/EF-1A subfamily.</text>
</comment>
<sequence length="458" mass="49926">MGKEKTHVNVVVIGHVDSGKSTTTGHLIYKCGGIDKRTIEKFEKEAAELGKGSFKYAWVLDKLKAERERGITIDIALWKFETPKYHVTVIDAPGHRDFIKNMITGTSQADCAILIIAGGVGEFEAGISKDGQTREHALLAYTLGVKQLIVAINKMDSVKWDESRYQEIVKETSNFIKKVGYNPKTVPFVPISGWNGDNMIEATTNAPWYKGWEKETKAGAVKGKTLLEAIDAIEPPVRPTDKALRLPLQDVYKIGGIGTVPVGRVETGVIKPGMVVTFAPSGVTTEVKSVEMHHEQLEEGVPGDNVGFNVKNVSVKEIRRGNVCGDSKNDPPKAAESFNATVIVLNHPGQISAGYSPVLDCHTAHIACKFDELLEKNDRRTGKKLEDSPKFLKAGDAAMVKFVPSKPMCVEAFTDYPPLGRFAVRDMRQTVAVGVIKSVVKSDKAGKVTKAAQKAGKK</sequence>
<protein>
    <recommendedName>
        <fullName>Elongation factor 1-alpha</fullName>
        <shortName>EF-1-alpha</shortName>
    </recommendedName>
</protein>